<name>NIP61_ARATH</name>
<feature type="chain" id="PRO_0000064069" description="Aquaporin NIP6-1">
    <location>
        <begin position="1"/>
        <end position="305"/>
    </location>
</feature>
<feature type="transmembrane region" description="Helical; Name=1" evidence="2">
    <location>
        <begin position="82"/>
        <end position="102"/>
    </location>
</feature>
<feature type="transmembrane region" description="Helical; Name=2" evidence="2">
    <location>
        <begin position="111"/>
        <end position="131"/>
    </location>
</feature>
<feature type="transmembrane region" description="Helical; Name=3" evidence="2">
    <location>
        <begin position="159"/>
        <end position="179"/>
    </location>
</feature>
<feature type="transmembrane region" description="Helical; Name=4" evidence="2">
    <location>
        <begin position="194"/>
        <end position="214"/>
    </location>
</feature>
<feature type="transmembrane region" description="Helical; Name=5" evidence="2">
    <location>
        <begin position="221"/>
        <end position="241"/>
    </location>
</feature>
<feature type="transmembrane region" description="Helical; Name=6" evidence="2">
    <location>
        <begin position="267"/>
        <end position="287"/>
    </location>
</feature>
<feature type="region of interest" description="Disordered" evidence="3">
    <location>
        <begin position="1"/>
        <end position="30"/>
    </location>
</feature>
<feature type="short sequence motif" description="NPA 1">
    <location>
        <begin position="139"/>
        <end position="141"/>
    </location>
</feature>
<feature type="short sequence motif" description="NPA 2">
    <location>
        <begin position="250"/>
        <end position="252"/>
    </location>
</feature>
<feature type="compositionally biased region" description="Low complexity" evidence="3">
    <location>
        <begin position="7"/>
        <end position="23"/>
    </location>
</feature>
<feature type="modified residue" description="Phosphoserine" evidence="1">
    <location>
        <position position="302"/>
    </location>
</feature>
<feature type="mutagenesis site" description="6-fold increase in water transport activity, but impaired in urea transport." evidence="5">
    <original>A</original>
    <variation>W</variation>
    <location>
        <position position="119"/>
    </location>
</feature>
<feature type="mutagenesis site" description="No effect." evidence="5">
    <original>V</original>
    <variation>A</variation>
    <location>
        <position position="252"/>
    </location>
</feature>
<comment type="function">
    <text evidence="5">Transports glycerol, urea and formamide, in Xenopus laevis oocytes. Very low water transport activity.</text>
</comment>
<comment type="subcellular location">
    <subcellularLocation>
        <location evidence="6">Membrane</location>
        <topology evidence="6">Multi-pass membrane protein</topology>
    </subcellularLocation>
</comment>
<comment type="tissue specificity">
    <text evidence="4">Expressed in roots.</text>
</comment>
<comment type="domain">
    <text>Aquaporins contain two tandem repeats each containing three membrane-spanning domains and a pore-forming loop with the signature motif Asn-Pro-Ala/Val (NPA).</text>
</comment>
<comment type="similarity">
    <text evidence="6">Belongs to the MIP/aquaporin (TC 1.A.8) family. NIP (TC 1.A.8.12) subfamily.</text>
</comment>
<gene>
    <name type="primary">NIP6-1</name>
    <name type="ordered locus">At1g80760</name>
    <name type="ORF">F23A5.11</name>
</gene>
<accession>Q9SAI4</accession>
<accession>Q5PP68</accession>
<evidence type="ECO:0000250" key="1">
    <source>
        <dbReference type="UniProtKB" id="P43286"/>
    </source>
</evidence>
<evidence type="ECO:0000255" key="2"/>
<evidence type="ECO:0000256" key="3">
    <source>
        <dbReference type="SAM" id="MobiDB-lite"/>
    </source>
</evidence>
<evidence type="ECO:0000269" key="4">
    <source>
    </source>
</evidence>
<evidence type="ECO:0000269" key="5">
    <source>
    </source>
</evidence>
<evidence type="ECO:0000305" key="6"/>
<keyword id="KW-0472">Membrane</keyword>
<keyword id="KW-0597">Phosphoprotein</keyword>
<keyword id="KW-1185">Reference proteome</keyword>
<keyword id="KW-0677">Repeat</keyword>
<keyword id="KW-0812">Transmembrane</keyword>
<keyword id="KW-1133">Transmembrane helix</keyword>
<keyword id="KW-0813">Transport</keyword>
<sequence length="305" mass="31845">MDHEEIPSTPSTPATTPGTPGAPLFGGFEGKRNGHNGRYTPKSLLKSCKCFSVDNEWALEDGRLPPVTCSLPPPNVSLYRKLGAEFVGTLILIFAGTATAIVNQKTDGAETLIGCAASAGLAVMIVILSTGHISGAHLNPAVTIAFAALKHFPWKHVPVYIGAQVMASVSAAFALKAVFEPTMSGGVTVPTVGLSQAFALEFIISFNLMFVVTAVATDTRAVGELAGIAVGATVMLNILIAGPATSASMNPVRTLGPAIAANNYRAIWVYLTAPILGALIGAGTYTIVKLPEEDEAPKERRSFRR</sequence>
<dbReference type="EMBL" id="AC011713">
    <property type="protein sequence ID" value="AAF14664.1"/>
    <property type="molecule type" value="Genomic_DNA"/>
</dbReference>
<dbReference type="EMBL" id="CP002684">
    <property type="protein sequence ID" value="AEE36445.1"/>
    <property type="molecule type" value="Genomic_DNA"/>
</dbReference>
<dbReference type="EMBL" id="BT020229">
    <property type="protein sequence ID" value="AAV74223.1"/>
    <property type="molecule type" value="mRNA"/>
</dbReference>
<dbReference type="EMBL" id="BT021924">
    <property type="protein sequence ID" value="AAX49373.1"/>
    <property type="molecule type" value="mRNA"/>
</dbReference>
<dbReference type="PIR" id="B96840">
    <property type="entry name" value="B96840"/>
</dbReference>
<dbReference type="RefSeq" id="NP_178191.1">
    <property type="nucleotide sequence ID" value="NM_106724.3"/>
</dbReference>
<dbReference type="SMR" id="Q9SAI4"/>
<dbReference type="BioGRID" id="29633">
    <property type="interactions" value="1"/>
</dbReference>
<dbReference type="FunCoup" id="Q9SAI4">
    <property type="interactions" value="41"/>
</dbReference>
<dbReference type="IntAct" id="Q9SAI4">
    <property type="interactions" value="1"/>
</dbReference>
<dbReference type="STRING" id="3702.Q9SAI4"/>
<dbReference type="TCDB" id="1.A.8.12.9">
    <property type="family name" value="the major intrinsic protein (mip) family"/>
</dbReference>
<dbReference type="GlyGen" id="Q9SAI4">
    <property type="glycosylation" value="2 sites"/>
</dbReference>
<dbReference type="PaxDb" id="3702-AT1G80760.1"/>
<dbReference type="ProteomicsDB" id="249436"/>
<dbReference type="EnsemblPlants" id="AT1G80760.1">
    <property type="protein sequence ID" value="AT1G80760.1"/>
    <property type="gene ID" value="AT1G80760"/>
</dbReference>
<dbReference type="GeneID" id="844415"/>
<dbReference type="Gramene" id="AT1G80760.1">
    <property type="protein sequence ID" value="AT1G80760.1"/>
    <property type="gene ID" value="AT1G80760"/>
</dbReference>
<dbReference type="KEGG" id="ath:AT1G80760"/>
<dbReference type="Araport" id="AT1G80760"/>
<dbReference type="TAIR" id="AT1G80760">
    <property type="gene designation" value="NIP6"/>
</dbReference>
<dbReference type="eggNOG" id="KOG0223">
    <property type="taxonomic scope" value="Eukaryota"/>
</dbReference>
<dbReference type="HOGENOM" id="CLU_020019_3_1_1"/>
<dbReference type="InParanoid" id="Q9SAI4"/>
<dbReference type="OMA" id="MQPEMEQ"/>
<dbReference type="PhylomeDB" id="Q9SAI4"/>
<dbReference type="PRO" id="PR:Q9SAI4"/>
<dbReference type="Proteomes" id="UP000006548">
    <property type="component" value="Chromosome 1"/>
</dbReference>
<dbReference type="ExpressionAtlas" id="Q9SAI4">
    <property type="expression patterns" value="baseline and differential"/>
</dbReference>
<dbReference type="GO" id="GO:0005886">
    <property type="term" value="C:plasma membrane"/>
    <property type="evidence" value="ECO:0000314"/>
    <property type="project" value="TAIR"/>
</dbReference>
<dbReference type="GO" id="GO:0046715">
    <property type="term" value="F:active borate transmembrane transporter activity"/>
    <property type="evidence" value="ECO:0000314"/>
    <property type="project" value="TAIR"/>
</dbReference>
<dbReference type="GO" id="GO:0015267">
    <property type="term" value="F:channel activity"/>
    <property type="evidence" value="ECO:0007669"/>
    <property type="project" value="InterPro"/>
</dbReference>
<dbReference type="GO" id="GO:0015168">
    <property type="term" value="F:glycerol transmembrane transporter activity"/>
    <property type="evidence" value="ECO:0000314"/>
    <property type="project" value="TAIR"/>
</dbReference>
<dbReference type="GO" id="GO:0015204">
    <property type="term" value="F:urea transmembrane transporter activity"/>
    <property type="evidence" value="ECO:0000314"/>
    <property type="project" value="TAIR"/>
</dbReference>
<dbReference type="GO" id="GO:0046713">
    <property type="term" value="P:borate transport"/>
    <property type="evidence" value="ECO:0000315"/>
    <property type="project" value="TAIR"/>
</dbReference>
<dbReference type="GO" id="GO:0080029">
    <property type="term" value="P:cellular response to boron-containing substance levels"/>
    <property type="evidence" value="ECO:0000270"/>
    <property type="project" value="TAIR"/>
</dbReference>
<dbReference type="CDD" id="cd00333">
    <property type="entry name" value="MIP"/>
    <property type="match status" value="1"/>
</dbReference>
<dbReference type="FunFam" id="1.20.1080.10:FF:000013">
    <property type="entry name" value="Aquaporin NIP2-1"/>
    <property type="match status" value="1"/>
</dbReference>
<dbReference type="Gene3D" id="1.20.1080.10">
    <property type="entry name" value="Glycerol uptake facilitator protein"/>
    <property type="match status" value="1"/>
</dbReference>
<dbReference type="InterPro" id="IPR023271">
    <property type="entry name" value="Aquaporin-like"/>
</dbReference>
<dbReference type="InterPro" id="IPR034294">
    <property type="entry name" value="Aquaporin_transptr"/>
</dbReference>
<dbReference type="InterPro" id="IPR000425">
    <property type="entry name" value="MIP"/>
</dbReference>
<dbReference type="InterPro" id="IPR022357">
    <property type="entry name" value="MIP_CS"/>
</dbReference>
<dbReference type="PANTHER" id="PTHR45724">
    <property type="entry name" value="AQUAPORIN NIP2-1"/>
    <property type="match status" value="1"/>
</dbReference>
<dbReference type="PANTHER" id="PTHR45724:SF19">
    <property type="entry name" value="AQUAPORIN NIP6-1"/>
    <property type="match status" value="1"/>
</dbReference>
<dbReference type="Pfam" id="PF00230">
    <property type="entry name" value="MIP"/>
    <property type="match status" value="1"/>
</dbReference>
<dbReference type="PRINTS" id="PR00783">
    <property type="entry name" value="MINTRINSICP"/>
</dbReference>
<dbReference type="SUPFAM" id="SSF81338">
    <property type="entry name" value="Aquaporin-like"/>
    <property type="match status" value="1"/>
</dbReference>
<dbReference type="PROSITE" id="PS00221">
    <property type="entry name" value="MIP"/>
    <property type="match status" value="1"/>
</dbReference>
<proteinExistence type="evidence at protein level"/>
<protein>
    <recommendedName>
        <fullName>Aquaporin NIP6-1</fullName>
    </recommendedName>
    <alternativeName>
        <fullName>NOD26-like intrinsic protein 6-1</fullName>
        <shortName>AtNIP6;1</shortName>
    </alternativeName>
</protein>
<organism>
    <name type="scientific">Arabidopsis thaliana</name>
    <name type="common">Mouse-ear cress</name>
    <dbReference type="NCBI Taxonomy" id="3702"/>
    <lineage>
        <taxon>Eukaryota</taxon>
        <taxon>Viridiplantae</taxon>
        <taxon>Streptophyta</taxon>
        <taxon>Embryophyta</taxon>
        <taxon>Tracheophyta</taxon>
        <taxon>Spermatophyta</taxon>
        <taxon>Magnoliopsida</taxon>
        <taxon>eudicotyledons</taxon>
        <taxon>Gunneridae</taxon>
        <taxon>Pentapetalae</taxon>
        <taxon>rosids</taxon>
        <taxon>malvids</taxon>
        <taxon>Brassicales</taxon>
        <taxon>Brassicaceae</taxon>
        <taxon>Camelineae</taxon>
        <taxon>Arabidopsis</taxon>
    </lineage>
</organism>
<reference key="1">
    <citation type="journal article" date="2000" name="Nature">
        <title>Sequence and analysis of chromosome 1 of the plant Arabidopsis thaliana.</title>
        <authorList>
            <person name="Theologis A."/>
            <person name="Ecker J.R."/>
            <person name="Palm C.J."/>
            <person name="Federspiel N.A."/>
            <person name="Kaul S."/>
            <person name="White O."/>
            <person name="Alonso J."/>
            <person name="Altafi H."/>
            <person name="Araujo R."/>
            <person name="Bowman C.L."/>
            <person name="Brooks S.Y."/>
            <person name="Buehler E."/>
            <person name="Chan A."/>
            <person name="Chao Q."/>
            <person name="Chen H."/>
            <person name="Cheuk R.F."/>
            <person name="Chin C.W."/>
            <person name="Chung M.K."/>
            <person name="Conn L."/>
            <person name="Conway A.B."/>
            <person name="Conway A.R."/>
            <person name="Creasy T.H."/>
            <person name="Dewar K."/>
            <person name="Dunn P."/>
            <person name="Etgu P."/>
            <person name="Feldblyum T.V."/>
            <person name="Feng J.-D."/>
            <person name="Fong B."/>
            <person name="Fujii C.Y."/>
            <person name="Gill J.E."/>
            <person name="Goldsmith A.D."/>
            <person name="Haas B."/>
            <person name="Hansen N.F."/>
            <person name="Hughes B."/>
            <person name="Huizar L."/>
            <person name="Hunter J.L."/>
            <person name="Jenkins J."/>
            <person name="Johnson-Hopson C."/>
            <person name="Khan S."/>
            <person name="Khaykin E."/>
            <person name="Kim C.J."/>
            <person name="Koo H.L."/>
            <person name="Kremenetskaia I."/>
            <person name="Kurtz D.B."/>
            <person name="Kwan A."/>
            <person name="Lam B."/>
            <person name="Langin-Hooper S."/>
            <person name="Lee A."/>
            <person name="Lee J.M."/>
            <person name="Lenz C.A."/>
            <person name="Li J.H."/>
            <person name="Li Y.-P."/>
            <person name="Lin X."/>
            <person name="Liu S.X."/>
            <person name="Liu Z.A."/>
            <person name="Luros J.S."/>
            <person name="Maiti R."/>
            <person name="Marziali A."/>
            <person name="Militscher J."/>
            <person name="Miranda M."/>
            <person name="Nguyen M."/>
            <person name="Nierman W.C."/>
            <person name="Osborne B.I."/>
            <person name="Pai G."/>
            <person name="Peterson J."/>
            <person name="Pham P.K."/>
            <person name="Rizzo M."/>
            <person name="Rooney T."/>
            <person name="Rowley D."/>
            <person name="Sakano H."/>
            <person name="Salzberg S.L."/>
            <person name="Schwartz J.R."/>
            <person name="Shinn P."/>
            <person name="Southwick A.M."/>
            <person name="Sun H."/>
            <person name="Tallon L.J."/>
            <person name="Tambunga G."/>
            <person name="Toriumi M.J."/>
            <person name="Town C.D."/>
            <person name="Utterback T."/>
            <person name="Van Aken S."/>
            <person name="Vaysberg M."/>
            <person name="Vysotskaia V.S."/>
            <person name="Walker M."/>
            <person name="Wu D."/>
            <person name="Yu G."/>
            <person name="Fraser C.M."/>
            <person name="Venter J.C."/>
            <person name="Davis R.W."/>
        </authorList>
    </citation>
    <scope>NUCLEOTIDE SEQUENCE [LARGE SCALE GENOMIC DNA]</scope>
    <source>
        <strain>cv. Columbia</strain>
    </source>
</reference>
<reference key="2">
    <citation type="journal article" date="2017" name="Plant J.">
        <title>Araport11: a complete reannotation of the Arabidopsis thaliana reference genome.</title>
        <authorList>
            <person name="Cheng C.Y."/>
            <person name="Krishnakumar V."/>
            <person name="Chan A.P."/>
            <person name="Thibaud-Nissen F."/>
            <person name="Schobel S."/>
            <person name="Town C.D."/>
        </authorList>
    </citation>
    <scope>GENOME REANNOTATION</scope>
    <source>
        <strain>cv. Columbia</strain>
    </source>
</reference>
<reference key="3">
    <citation type="submission" date="2005-03" db="EMBL/GenBank/DDBJ databases">
        <title>Arabidopsis ORF clones.</title>
        <authorList>
            <person name="Kim C.J."/>
            <person name="Chen H."/>
            <person name="Cheuk R.F."/>
            <person name="Shinn P."/>
            <person name="Ecker J.R."/>
        </authorList>
    </citation>
    <scope>NUCLEOTIDE SEQUENCE [LARGE SCALE MRNA]</scope>
    <source>
        <strain>cv. Columbia</strain>
    </source>
</reference>
<reference key="4">
    <citation type="journal article" date="2002" name="Genome Biol.">
        <title>From genome to function: the Arabidopsis aquaporins.</title>
        <authorList>
            <person name="Quigley F."/>
            <person name="Rosenberg J.M."/>
            <person name="Shachar-Hill Y."/>
            <person name="Bohnert H.J."/>
        </authorList>
    </citation>
    <scope>NOMENCLATURE</scope>
    <scope>TISSUE SPECIFICITY</scope>
</reference>
<reference key="5">
    <citation type="journal article" date="2005" name="Biochemistry">
        <title>Distinct transport selectivity of two structural subclasses of the nodulin-like intrinsic protein family of plant aquaglyceroporin channels.</title>
        <authorList>
            <person name="Wallace I.S."/>
            <person name="Roberts D.M."/>
        </authorList>
    </citation>
    <scope>FUNCTION</scope>
    <scope>MUTAGENESIS OF ALA-119 AND VAL-252</scope>
</reference>